<gene>
    <name evidence="1" type="primary">ctaA</name>
    <name type="ordered locus">BH07520</name>
</gene>
<accession>Q6G3L5</accession>
<reference key="1">
    <citation type="journal article" date="2004" name="Proc. Natl. Acad. Sci. U.S.A.">
        <title>The louse-borne human pathogen Bartonella quintana is a genomic derivative of the zoonotic agent Bartonella henselae.</title>
        <authorList>
            <person name="Alsmark U.C.M."/>
            <person name="Frank A.C."/>
            <person name="Karlberg E.O."/>
            <person name="Legault B.-A."/>
            <person name="Ardell D.H."/>
            <person name="Canbaeck B."/>
            <person name="Eriksson A.-S."/>
            <person name="Naeslund A.K."/>
            <person name="Handley S.A."/>
            <person name="Huvet M."/>
            <person name="La Scola B."/>
            <person name="Holmberg M."/>
            <person name="Andersson S.G.E."/>
        </authorList>
    </citation>
    <scope>NUCLEOTIDE SEQUENCE [LARGE SCALE GENOMIC DNA]</scope>
    <source>
        <strain>ATCC 49882 / DSM 28221 / CCUG 30454 / Houston 1</strain>
    </source>
</reference>
<keyword id="KW-1003">Cell membrane</keyword>
<keyword id="KW-0350">Heme biosynthesis</keyword>
<keyword id="KW-0408">Iron</keyword>
<keyword id="KW-0472">Membrane</keyword>
<keyword id="KW-0479">Metal-binding</keyword>
<keyword id="KW-0560">Oxidoreductase</keyword>
<keyword id="KW-0812">Transmembrane</keyword>
<keyword id="KW-1133">Transmembrane helix</keyword>
<sequence length="358" mass="40630">MAVKSLSNSILTPLQKKNRKQIQVWLYSILLLCLAIVLVGGATRLTGSGLSITEWKPIHGVIPPIGVEQWQEEFLKYQQIAQYKMLNRDMTLSAFKVIFWWEWAHRVLGRLVGLVALLGLIWFWAIKHIEKNVLLQLIIVPILIAFQGVVGWWMVASGIGQSNLTSVSQYRLAFHLITACFVIIFVTYLSQGLAEYSEKPASHRVQYFAGWLVVLILIEVYFGALVAGLHAGKVYNTWPLMDGQFIPDGLLQHDPIWLNLFENPLTVQFVHRFFAYILFFVAIIHAFYVQKNIPHSIHARRAFFICVMIAVQALLGIITLLQEVPISLGLIHQSVALAILCFSVAHWRATKGAYRAIE</sequence>
<evidence type="ECO:0000255" key="1">
    <source>
        <dbReference type="HAMAP-Rule" id="MF_01665"/>
    </source>
</evidence>
<dbReference type="EC" id="1.17.99.9" evidence="1"/>
<dbReference type="EMBL" id="BX897699">
    <property type="protein sequence ID" value="CAF27553.1"/>
    <property type="molecule type" value="Genomic_DNA"/>
</dbReference>
<dbReference type="SMR" id="Q6G3L5"/>
<dbReference type="PaxDb" id="283166-BH07520"/>
<dbReference type="EnsemblBacteria" id="CAF27553">
    <property type="protein sequence ID" value="CAF27553"/>
    <property type="gene ID" value="BH07520"/>
</dbReference>
<dbReference type="KEGG" id="bhe:BH07520"/>
<dbReference type="eggNOG" id="COG1612">
    <property type="taxonomic scope" value="Bacteria"/>
</dbReference>
<dbReference type="OrthoDB" id="9793156at2"/>
<dbReference type="UniPathway" id="UPA00269">
    <property type="reaction ID" value="UER00713"/>
</dbReference>
<dbReference type="Proteomes" id="UP000000421">
    <property type="component" value="Chromosome"/>
</dbReference>
<dbReference type="GO" id="GO:0005886">
    <property type="term" value="C:plasma membrane"/>
    <property type="evidence" value="ECO:0007669"/>
    <property type="project" value="UniProtKB-SubCell"/>
</dbReference>
<dbReference type="GO" id="GO:0046872">
    <property type="term" value="F:metal ion binding"/>
    <property type="evidence" value="ECO:0007669"/>
    <property type="project" value="UniProtKB-KW"/>
</dbReference>
<dbReference type="GO" id="GO:0016653">
    <property type="term" value="F:oxidoreductase activity, acting on NAD(P)H, heme protein as acceptor"/>
    <property type="evidence" value="ECO:0007669"/>
    <property type="project" value="InterPro"/>
</dbReference>
<dbReference type="GO" id="GO:0006784">
    <property type="term" value="P:heme A biosynthetic process"/>
    <property type="evidence" value="ECO:0007669"/>
    <property type="project" value="UniProtKB-UniRule"/>
</dbReference>
<dbReference type="HAMAP" id="MF_01665">
    <property type="entry name" value="HemeA_synth_type2"/>
    <property type="match status" value="1"/>
</dbReference>
<dbReference type="InterPro" id="IPR003780">
    <property type="entry name" value="COX15/CtaA_fam"/>
</dbReference>
<dbReference type="InterPro" id="IPR023754">
    <property type="entry name" value="HemeA_Synthase_type2"/>
</dbReference>
<dbReference type="PANTHER" id="PTHR23289">
    <property type="entry name" value="CYTOCHROME C OXIDASE ASSEMBLY PROTEIN COX15"/>
    <property type="match status" value="1"/>
</dbReference>
<dbReference type="PANTHER" id="PTHR23289:SF2">
    <property type="entry name" value="CYTOCHROME C OXIDASE ASSEMBLY PROTEIN COX15 HOMOLOG"/>
    <property type="match status" value="1"/>
</dbReference>
<dbReference type="Pfam" id="PF02628">
    <property type="entry name" value="COX15-CtaA"/>
    <property type="match status" value="1"/>
</dbReference>
<comment type="function">
    <text evidence="1">Catalyzes the conversion of heme O to heme A by two successive hydroxylations of the methyl group at C8. The first hydroxylation forms heme I, the second hydroxylation results in an unstable dihydroxymethyl group, which spontaneously dehydrates, resulting in the formyl group of heme A.</text>
</comment>
<comment type="catalytic activity">
    <reaction evidence="1">
        <text>Fe(II)-heme o + 2 A + H2O = Fe(II)-heme a + 2 AH2</text>
        <dbReference type="Rhea" id="RHEA:63388"/>
        <dbReference type="ChEBI" id="CHEBI:13193"/>
        <dbReference type="ChEBI" id="CHEBI:15377"/>
        <dbReference type="ChEBI" id="CHEBI:17499"/>
        <dbReference type="ChEBI" id="CHEBI:60530"/>
        <dbReference type="ChEBI" id="CHEBI:61715"/>
        <dbReference type="EC" id="1.17.99.9"/>
    </reaction>
    <physiologicalReaction direction="left-to-right" evidence="1">
        <dbReference type="Rhea" id="RHEA:63389"/>
    </physiologicalReaction>
</comment>
<comment type="cofactor">
    <cofactor evidence="1">
        <name>heme b</name>
        <dbReference type="ChEBI" id="CHEBI:60344"/>
    </cofactor>
</comment>
<comment type="pathway">
    <text evidence="1">Porphyrin-containing compound metabolism; heme A biosynthesis; heme A from heme O: step 1/1.</text>
</comment>
<comment type="subunit">
    <text evidence="1">Interacts with CtaB.</text>
</comment>
<comment type="subcellular location">
    <subcellularLocation>
        <location evidence="1">Cell membrane</location>
        <topology evidence="1">Multi-pass membrane protein</topology>
    </subcellularLocation>
</comment>
<comment type="similarity">
    <text evidence="1">Belongs to the COX15/CtaA family. Type 2 subfamily.</text>
</comment>
<name>CTAA_BARHE</name>
<organism>
    <name type="scientific">Bartonella henselae (strain ATCC 49882 / DSM 28221 / CCUG 30454 / Houston 1)</name>
    <name type="common">Rochalimaea henselae</name>
    <dbReference type="NCBI Taxonomy" id="283166"/>
    <lineage>
        <taxon>Bacteria</taxon>
        <taxon>Pseudomonadati</taxon>
        <taxon>Pseudomonadota</taxon>
        <taxon>Alphaproteobacteria</taxon>
        <taxon>Hyphomicrobiales</taxon>
        <taxon>Bartonellaceae</taxon>
        <taxon>Bartonella</taxon>
    </lineage>
</organism>
<feature type="chain" id="PRO_0000349013" description="Heme A synthase">
    <location>
        <begin position="1"/>
        <end position="358"/>
    </location>
</feature>
<feature type="transmembrane region" description="Helical" evidence="1">
    <location>
        <begin position="22"/>
        <end position="42"/>
    </location>
</feature>
<feature type="transmembrane region" description="Helical" evidence="1">
    <location>
        <begin position="107"/>
        <end position="127"/>
    </location>
</feature>
<feature type="transmembrane region" description="Helical" evidence="1">
    <location>
        <begin position="133"/>
        <end position="153"/>
    </location>
</feature>
<feature type="transmembrane region" description="Helical" evidence="1">
    <location>
        <begin position="172"/>
        <end position="192"/>
    </location>
</feature>
<feature type="transmembrane region" description="Helical" evidence="1">
    <location>
        <begin position="208"/>
        <end position="228"/>
    </location>
</feature>
<feature type="transmembrane region" description="Helical" evidence="1">
    <location>
        <begin position="269"/>
        <end position="289"/>
    </location>
</feature>
<feature type="transmembrane region" description="Helical" evidence="1">
    <location>
        <begin position="302"/>
        <end position="322"/>
    </location>
</feature>
<feature type="transmembrane region" description="Helical" evidence="1">
    <location>
        <begin position="324"/>
        <end position="344"/>
    </location>
</feature>
<feature type="binding site" description="axial binding residue" evidence="1">
    <location>
        <position position="271"/>
    </location>
    <ligand>
        <name>heme</name>
        <dbReference type="ChEBI" id="CHEBI:30413"/>
    </ligand>
    <ligandPart>
        <name>Fe</name>
        <dbReference type="ChEBI" id="CHEBI:18248"/>
    </ligandPart>
</feature>
<feature type="binding site" description="axial binding residue" evidence="1">
    <location>
        <position position="332"/>
    </location>
    <ligand>
        <name>heme</name>
        <dbReference type="ChEBI" id="CHEBI:30413"/>
    </ligand>
    <ligandPart>
        <name>Fe</name>
        <dbReference type="ChEBI" id="CHEBI:18248"/>
    </ligandPart>
</feature>
<proteinExistence type="inferred from homology"/>
<protein>
    <recommendedName>
        <fullName evidence="1">Heme A synthase</fullName>
        <shortName evidence="1">HAS</shortName>
        <ecNumber evidence="1">1.17.99.9</ecNumber>
    </recommendedName>
    <alternativeName>
        <fullName evidence="1">Cytochrome aa3-controlling protein</fullName>
    </alternativeName>
</protein>